<proteinExistence type="evidence at transcript level"/>
<sequence>QACSETSDCLEGLECSGNQCLIPYDGDDSCVTGFDCVIGVGCVYDNGNPGRCIRDHRCKGDKKDICTNPATECDEDKVCGYKEGETCYGPCRKGLTCRNTRCQK</sequence>
<reference key="1">
    <citation type="journal article" date="2006" name="J. Mol. Evol.">
        <title>Genes expressed in a turrid venom duct: divergence and similarity to conotoxins.</title>
        <authorList>
            <person name="Watkins M."/>
            <person name="Hillyard D.R."/>
            <person name="Olivera B.M."/>
        </authorList>
    </citation>
    <scope>NUCLEOTIDE SEQUENCE [MRNA]</scope>
    <source>
        <tissue>Venom duct</tissue>
    </source>
</reference>
<keyword id="KW-1015">Disulfide bond</keyword>
<keyword id="KW-0872">Ion channel impairing toxin</keyword>
<keyword id="KW-0528">Neurotoxin</keyword>
<keyword id="KW-0964">Secreted</keyword>
<keyword id="KW-0800">Toxin</keyword>
<accession>P0DKP0</accession>
<feature type="chain" id="PRO_0000419856" description="Turripeptide OL55">
    <location>
        <begin position="1"/>
        <end position="104"/>
    </location>
</feature>
<organism>
    <name type="scientific">Iotyrris olangoensis</name>
    <name type="common">Sea snail</name>
    <name type="synonym">Lophiotoma olangoensis</name>
    <dbReference type="NCBI Taxonomy" id="2420066"/>
    <lineage>
        <taxon>Eukaryota</taxon>
        <taxon>Metazoa</taxon>
        <taxon>Spiralia</taxon>
        <taxon>Lophotrochozoa</taxon>
        <taxon>Mollusca</taxon>
        <taxon>Gastropoda</taxon>
        <taxon>Caenogastropoda</taxon>
        <taxon>Neogastropoda</taxon>
        <taxon>Conoidea</taxon>
        <taxon>Turridae</taxon>
        <taxon>Iotyrris</taxon>
    </lineage>
</organism>
<protein>
    <recommendedName>
        <fullName>Turripeptide OL55</fullName>
    </recommendedName>
</protein>
<evidence type="ECO:0000250" key="1"/>
<comment type="function">
    <text evidence="1">Acts as a neurotoxin by inhibiting an ion channel.</text>
</comment>
<comment type="subcellular location">
    <subcellularLocation>
        <location evidence="1">Secreted</location>
    </subcellularLocation>
</comment>
<comment type="tissue specificity">
    <text>Expressed by the venom duct.</text>
</comment>
<comment type="domain">
    <text>The cysteine framework is C-C-C-C-C-C-C-C-C-C-C-C-C-C-C-C.</text>
</comment>
<comment type="PTM">
    <text evidence="1">Contains 8 disulfide bonds.</text>
</comment>
<dbReference type="GO" id="GO:0005576">
    <property type="term" value="C:extracellular region"/>
    <property type="evidence" value="ECO:0007669"/>
    <property type="project" value="UniProtKB-SubCell"/>
</dbReference>
<dbReference type="GO" id="GO:0099106">
    <property type="term" value="F:ion channel regulator activity"/>
    <property type="evidence" value="ECO:0007669"/>
    <property type="project" value="UniProtKB-KW"/>
</dbReference>
<dbReference type="GO" id="GO:0090729">
    <property type="term" value="F:toxin activity"/>
    <property type="evidence" value="ECO:0007669"/>
    <property type="project" value="UniProtKB-KW"/>
</dbReference>
<name>TU55_IOTOL</name>